<keyword id="KW-0963">Cytoplasm</keyword>
<keyword id="KW-0238">DNA-binding</keyword>
<keyword id="KW-0520">NAD</keyword>
<keyword id="KW-1185">Reference proteome</keyword>
<keyword id="KW-0678">Repressor</keyword>
<keyword id="KW-0804">Transcription</keyword>
<keyword id="KW-0805">Transcription regulation</keyword>
<feature type="chain" id="PRO_1000065409" description="Redox-sensing transcriptional repressor Rex">
    <location>
        <begin position="1"/>
        <end position="213"/>
    </location>
</feature>
<feature type="DNA-binding region" description="H-T-H motif" evidence="1">
    <location>
        <begin position="16"/>
        <end position="55"/>
    </location>
</feature>
<feature type="binding site" evidence="1">
    <location>
        <begin position="90"/>
        <end position="95"/>
    </location>
    <ligand>
        <name>NAD(+)</name>
        <dbReference type="ChEBI" id="CHEBI:57540"/>
    </ligand>
</feature>
<reference key="1">
    <citation type="journal article" date="2006" name="Proc. Natl. Acad. Sci. U.S.A.">
        <title>Multireplicon genome architecture of Lactobacillus salivarius.</title>
        <authorList>
            <person name="Claesson M.J."/>
            <person name="Li Y."/>
            <person name="Leahy S."/>
            <person name="Canchaya C."/>
            <person name="van Pijkeren J.P."/>
            <person name="Cerdeno-Tarraga A.M."/>
            <person name="Parkhill J."/>
            <person name="Flynn S."/>
            <person name="O'Sullivan G.C."/>
            <person name="Collins J.K."/>
            <person name="Higgins D."/>
            <person name="Shanahan F."/>
            <person name="Fitzgerald G.F."/>
            <person name="van Sinderen D."/>
            <person name="O'Toole P.W."/>
        </authorList>
    </citation>
    <scope>NUCLEOTIDE SEQUENCE [LARGE SCALE GENOMIC DNA]</scope>
    <source>
        <strain>UCC118</strain>
    </source>
</reference>
<evidence type="ECO:0000255" key="1">
    <source>
        <dbReference type="HAMAP-Rule" id="MF_01131"/>
    </source>
</evidence>
<organism>
    <name type="scientific">Ligilactobacillus salivarius (strain UCC118)</name>
    <name type="common">Lactobacillus salivarius</name>
    <dbReference type="NCBI Taxonomy" id="362948"/>
    <lineage>
        <taxon>Bacteria</taxon>
        <taxon>Bacillati</taxon>
        <taxon>Bacillota</taxon>
        <taxon>Bacilli</taxon>
        <taxon>Lactobacillales</taxon>
        <taxon>Lactobacillaceae</taxon>
        <taxon>Ligilactobacillus</taxon>
    </lineage>
</organism>
<accession>Q1WSV7</accession>
<dbReference type="EMBL" id="CP000233">
    <property type="protein sequence ID" value="ABE00022.1"/>
    <property type="molecule type" value="Genomic_DNA"/>
</dbReference>
<dbReference type="RefSeq" id="WP_003710514.1">
    <property type="nucleotide sequence ID" value="NC_007929.1"/>
</dbReference>
<dbReference type="RefSeq" id="YP_536105.1">
    <property type="nucleotide sequence ID" value="NC_007929.1"/>
</dbReference>
<dbReference type="SMR" id="Q1WSV7"/>
<dbReference type="STRING" id="362948.LSL_1214"/>
<dbReference type="KEGG" id="lsl:LSL_1214"/>
<dbReference type="PATRIC" id="fig|362948.14.peg.1288"/>
<dbReference type="HOGENOM" id="CLU_061534_1_1_9"/>
<dbReference type="OrthoDB" id="9784760at2"/>
<dbReference type="Proteomes" id="UP000006559">
    <property type="component" value="Chromosome"/>
</dbReference>
<dbReference type="GO" id="GO:0005737">
    <property type="term" value="C:cytoplasm"/>
    <property type="evidence" value="ECO:0007669"/>
    <property type="project" value="UniProtKB-SubCell"/>
</dbReference>
<dbReference type="GO" id="GO:0003677">
    <property type="term" value="F:DNA binding"/>
    <property type="evidence" value="ECO:0007669"/>
    <property type="project" value="UniProtKB-UniRule"/>
</dbReference>
<dbReference type="GO" id="GO:0003700">
    <property type="term" value="F:DNA-binding transcription factor activity"/>
    <property type="evidence" value="ECO:0007669"/>
    <property type="project" value="UniProtKB-UniRule"/>
</dbReference>
<dbReference type="GO" id="GO:0045892">
    <property type="term" value="P:negative regulation of DNA-templated transcription"/>
    <property type="evidence" value="ECO:0007669"/>
    <property type="project" value="InterPro"/>
</dbReference>
<dbReference type="GO" id="GO:0051775">
    <property type="term" value="P:response to redox state"/>
    <property type="evidence" value="ECO:0007669"/>
    <property type="project" value="InterPro"/>
</dbReference>
<dbReference type="Gene3D" id="3.40.50.720">
    <property type="entry name" value="NAD(P)-binding Rossmann-like Domain"/>
    <property type="match status" value="1"/>
</dbReference>
<dbReference type="Gene3D" id="1.10.10.10">
    <property type="entry name" value="Winged helix-like DNA-binding domain superfamily/Winged helix DNA-binding domain"/>
    <property type="match status" value="1"/>
</dbReference>
<dbReference type="HAMAP" id="MF_01131">
    <property type="entry name" value="Rex"/>
    <property type="match status" value="1"/>
</dbReference>
<dbReference type="InterPro" id="IPR003781">
    <property type="entry name" value="CoA-bd"/>
</dbReference>
<dbReference type="InterPro" id="IPR036291">
    <property type="entry name" value="NAD(P)-bd_dom_sf"/>
</dbReference>
<dbReference type="InterPro" id="IPR009718">
    <property type="entry name" value="Rex_DNA-bd_C_dom"/>
</dbReference>
<dbReference type="InterPro" id="IPR022876">
    <property type="entry name" value="Tscrpt_rep_Rex"/>
</dbReference>
<dbReference type="InterPro" id="IPR036388">
    <property type="entry name" value="WH-like_DNA-bd_sf"/>
</dbReference>
<dbReference type="InterPro" id="IPR036390">
    <property type="entry name" value="WH_DNA-bd_sf"/>
</dbReference>
<dbReference type="NCBIfam" id="NF003989">
    <property type="entry name" value="PRK05472.1-3"/>
    <property type="match status" value="1"/>
</dbReference>
<dbReference type="NCBIfam" id="NF003991">
    <property type="entry name" value="PRK05472.1-5"/>
    <property type="match status" value="1"/>
</dbReference>
<dbReference type="NCBIfam" id="NF003994">
    <property type="entry name" value="PRK05472.2-3"/>
    <property type="match status" value="1"/>
</dbReference>
<dbReference type="NCBIfam" id="NF003995">
    <property type="entry name" value="PRK05472.2-4"/>
    <property type="match status" value="1"/>
</dbReference>
<dbReference type="NCBIfam" id="NF003996">
    <property type="entry name" value="PRK05472.2-5"/>
    <property type="match status" value="1"/>
</dbReference>
<dbReference type="PANTHER" id="PTHR35786">
    <property type="entry name" value="REDOX-SENSING TRANSCRIPTIONAL REPRESSOR REX"/>
    <property type="match status" value="1"/>
</dbReference>
<dbReference type="PANTHER" id="PTHR35786:SF1">
    <property type="entry name" value="REDOX-SENSING TRANSCRIPTIONAL REPRESSOR REX 1"/>
    <property type="match status" value="1"/>
</dbReference>
<dbReference type="Pfam" id="PF02629">
    <property type="entry name" value="CoA_binding"/>
    <property type="match status" value="1"/>
</dbReference>
<dbReference type="Pfam" id="PF06971">
    <property type="entry name" value="Put_DNA-bind_N"/>
    <property type="match status" value="1"/>
</dbReference>
<dbReference type="SMART" id="SM00881">
    <property type="entry name" value="CoA_binding"/>
    <property type="match status" value="1"/>
</dbReference>
<dbReference type="SUPFAM" id="SSF51735">
    <property type="entry name" value="NAD(P)-binding Rossmann-fold domains"/>
    <property type="match status" value="1"/>
</dbReference>
<dbReference type="SUPFAM" id="SSF46785">
    <property type="entry name" value="Winged helix' DNA-binding domain"/>
    <property type="match status" value="1"/>
</dbReference>
<protein>
    <recommendedName>
        <fullName evidence="1">Redox-sensing transcriptional repressor Rex</fullName>
    </recommendedName>
</protein>
<sequence>MAEVKIPQATAKRLPIYYRYLRLLSNSGKNRVSSTELAEAVKVDSATIRRDFSYFGALGKRGYGYDVQSLLDFFTKQLNQDTLTNVALVGVGNLGHALLNFNFHQSNHVRISAAFDVNEDITGTIQSGIPVYPMSDMKEQLKLQQIEIVILTVPAPVAQKVTDELVEVGVRGILNFTPLRITVPENIRVQNVDLTNEMETLIYFLNHFGSTEE</sequence>
<gene>
    <name evidence="1" type="primary">rex</name>
    <name type="ordered locus">LSL_1214</name>
</gene>
<name>REX_LIGS1</name>
<comment type="function">
    <text evidence="1">Modulates transcription in response to changes in cellular NADH/NAD(+) redox state.</text>
</comment>
<comment type="subunit">
    <text evidence="1">Homodimer.</text>
</comment>
<comment type="subcellular location">
    <subcellularLocation>
        <location evidence="1">Cytoplasm</location>
    </subcellularLocation>
</comment>
<comment type="similarity">
    <text evidence="1">Belongs to the transcriptional regulatory Rex family.</text>
</comment>
<proteinExistence type="inferred from homology"/>